<sequence>MSKKRIYEYAKELNVKSKEIIDELKNMNVEVSNHMQALEDDQIKTLDKKFRQQESNNNTKQNTQNNHQKQQNNNNNKNNNKQSNKGNANQKGNNNNKNNAKNNKNNKNNKNNKNNKNNKGNKNNKPAAEPKEMPSKITYEEGITVGELADKLNIESSGIIKKLFLLGIVANINQALDEETLELIADDYGVELEKEVVVNEEDLSIYFDEEEADPDAIERPAVVTIMGHVDHGKTTLLDSIRHTKVTAGEAGGITQHIGAYQIENAGKKITFLDTPGHAAFTTMRARGAQVTDITILVVAADDGVMPQTIEAINHAKEANVPTIVAVNKIDKPTANPDRVMQELTEYGLIPEDWGGETIFVPLSALSGEGIDDLLEMIGLVAEVQELKANPDKQAVGTVIEAELDKSRGPAASLLVQNGTLNVGDSIVVGNTYGRIRAMVNDLGQRIKSAGPSTPVEITGINDVPLAGDRFVIFKDEKQARRIGEARHEASVIQQRQESKNVSLDNLFEQMKQGEMKDLNVIIKGDVQGSVEALAASLMKIDVEGVNVRIIHTAVGAINESDVTLANASNGIIIGFNVRPDAGAKRAAEAENVDMRLHRVIYNVIEEIESAMKGLLDPEFEEQVIGQAEVRQTFKVSKVGTIAGSYVTEGKITRNAGVRIIRDGIVLFEGELDTLKRFKDDAKEVAQGYECGITIEKFNDIKEGDIIEAFEMVEIER</sequence>
<protein>
    <recommendedName>
        <fullName evidence="2">Translation initiation factor IF-2</fullName>
    </recommendedName>
</protein>
<dbReference type="EMBL" id="AP006716">
    <property type="protein sequence ID" value="BAE04954.1"/>
    <property type="molecule type" value="Genomic_DNA"/>
</dbReference>
<dbReference type="RefSeq" id="WP_011275931.1">
    <property type="nucleotide sequence ID" value="NC_007168.1"/>
</dbReference>
<dbReference type="SMR" id="Q4L5X1"/>
<dbReference type="KEGG" id="sha:SH1645"/>
<dbReference type="eggNOG" id="COG0532">
    <property type="taxonomic scope" value="Bacteria"/>
</dbReference>
<dbReference type="HOGENOM" id="CLU_006301_5_1_9"/>
<dbReference type="OrthoDB" id="9811804at2"/>
<dbReference type="Proteomes" id="UP000000543">
    <property type="component" value="Chromosome"/>
</dbReference>
<dbReference type="GO" id="GO:0005829">
    <property type="term" value="C:cytosol"/>
    <property type="evidence" value="ECO:0007669"/>
    <property type="project" value="TreeGrafter"/>
</dbReference>
<dbReference type="GO" id="GO:0005525">
    <property type="term" value="F:GTP binding"/>
    <property type="evidence" value="ECO:0007669"/>
    <property type="project" value="UniProtKB-KW"/>
</dbReference>
<dbReference type="GO" id="GO:0003924">
    <property type="term" value="F:GTPase activity"/>
    <property type="evidence" value="ECO:0007669"/>
    <property type="project" value="UniProtKB-UniRule"/>
</dbReference>
<dbReference type="GO" id="GO:0003743">
    <property type="term" value="F:translation initiation factor activity"/>
    <property type="evidence" value="ECO:0007669"/>
    <property type="project" value="UniProtKB-UniRule"/>
</dbReference>
<dbReference type="CDD" id="cd01887">
    <property type="entry name" value="IF2_eIF5B"/>
    <property type="match status" value="1"/>
</dbReference>
<dbReference type="CDD" id="cd03702">
    <property type="entry name" value="IF2_mtIF2_II"/>
    <property type="match status" value="1"/>
</dbReference>
<dbReference type="CDD" id="cd03692">
    <property type="entry name" value="mtIF2_IVc"/>
    <property type="match status" value="1"/>
</dbReference>
<dbReference type="FunFam" id="2.40.30.10:FF:000007">
    <property type="entry name" value="Translation initiation factor IF-2"/>
    <property type="match status" value="1"/>
</dbReference>
<dbReference type="FunFam" id="2.40.30.10:FF:000008">
    <property type="entry name" value="Translation initiation factor IF-2"/>
    <property type="match status" value="1"/>
</dbReference>
<dbReference type="FunFam" id="3.40.50.10050:FF:000001">
    <property type="entry name" value="Translation initiation factor IF-2"/>
    <property type="match status" value="1"/>
</dbReference>
<dbReference type="FunFam" id="3.40.50.300:FF:000019">
    <property type="entry name" value="Translation initiation factor IF-2"/>
    <property type="match status" value="1"/>
</dbReference>
<dbReference type="Gene3D" id="1.10.10.2480">
    <property type="match status" value="1"/>
</dbReference>
<dbReference type="Gene3D" id="3.40.50.300">
    <property type="entry name" value="P-loop containing nucleotide triphosphate hydrolases"/>
    <property type="match status" value="1"/>
</dbReference>
<dbReference type="Gene3D" id="2.40.30.10">
    <property type="entry name" value="Translation factors"/>
    <property type="match status" value="2"/>
</dbReference>
<dbReference type="Gene3D" id="3.40.50.10050">
    <property type="entry name" value="Translation initiation factor IF- 2, domain 3"/>
    <property type="match status" value="1"/>
</dbReference>
<dbReference type="HAMAP" id="MF_00100_B">
    <property type="entry name" value="IF_2_B"/>
    <property type="match status" value="1"/>
</dbReference>
<dbReference type="InterPro" id="IPR053905">
    <property type="entry name" value="EF-G-like_DII"/>
</dbReference>
<dbReference type="InterPro" id="IPR044145">
    <property type="entry name" value="IF2_II"/>
</dbReference>
<dbReference type="InterPro" id="IPR006847">
    <property type="entry name" value="IF2_N"/>
</dbReference>
<dbReference type="InterPro" id="IPR027417">
    <property type="entry name" value="P-loop_NTPase"/>
</dbReference>
<dbReference type="InterPro" id="IPR005225">
    <property type="entry name" value="Small_GTP-bd"/>
</dbReference>
<dbReference type="InterPro" id="IPR000795">
    <property type="entry name" value="T_Tr_GTP-bd_dom"/>
</dbReference>
<dbReference type="InterPro" id="IPR000178">
    <property type="entry name" value="TF_IF2_bacterial-like"/>
</dbReference>
<dbReference type="InterPro" id="IPR015760">
    <property type="entry name" value="TIF_IF2"/>
</dbReference>
<dbReference type="InterPro" id="IPR023115">
    <property type="entry name" value="TIF_IF2_dom3"/>
</dbReference>
<dbReference type="InterPro" id="IPR036925">
    <property type="entry name" value="TIF_IF2_dom3_sf"/>
</dbReference>
<dbReference type="InterPro" id="IPR009000">
    <property type="entry name" value="Transl_B-barrel_sf"/>
</dbReference>
<dbReference type="NCBIfam" id="TIGR00487">
    <property type="entry name" value="IF-2"/>
    <property type="match status" value="1"/>
</dbReference>
<dbReference type="NCBIfam" id="TIGR00231">
    <property type="entry name" value="small_GTP"/>
    <property type="match status" value="1"/>
</dbReference>
<dbReference type="PANTHER" id="PTHR43381:SF5">
    <property type="entry name" value="TR-TYPE G DOMAIN-CONTAINING PROTEIN"/>
    <property type="match status" value="1"/>
</dbReference>
<dbReference type="PANTHER" id="PTHR43381">
    <property type="entry name" value="TRANSLATION INITIATION FACTOR IF-2-RELATED"/>
    <property type="match status" value="1"/>
</dbReference>
<dbReference type="Pfam" id="PF22042">
    <property type="entry name" value="EF-G_D2"/>
    <property type="match status" value="1"/>
</dbReference>
<dbReference type="Pfam" id="PF00009">
    <property type="entry name" value="GTP_EFTU"/>
    <property type="match status" value="1"/>
</dbReference>
<dbReference type="Pfam" id="PF11987">
    <property type="entry name" value="IF-2"/>
    <property type="match status" value="1"/>
</dbReference>
<dbReference type="Pfam" id="PF04760">
    <property type="entry name" value="IF2_N"/>
    <property type="match status" value="2"/>
</dbReference>
<dbReference type="SUPFAM" id="SSF52156">
    <property type="entry name" value="Initiation factor IF2/eIF5b, domain 3"/>
    <property type="match status" value="1"/>
</dbReference>
<dbReference type="SUPFAM" id="SSF52540">
    <property type="entry name" value="P-loop containing nucleoside triphosphate hydrolases"/>
    <property type="match status" value="1"/>
</dbReference>
<dbReference type="SUPFAM" id="SSF50447">
    <property type="entry name" value="Translation proteins"/>
    <property type="match status" value="2"/>
</dbReference>
<dbReference type="PROSITE" id="PS51722">
    <property type="entry name" value="G_TR_2"/>
    <property type="match status" value="1"/>
</dbReference>
<dbReference type="PROSITE" id="PS01176">
    <property type="entry name" value="IF2"/>
    <property type="match status" value="1"/>
</dbReference>
<evidence type="ECO:0000250" key="1"/>
<evidence type="ECO:0000255" key="2">
    <source>
        <dbReference type="HAMAP-Rule" id="MF_00100"/>
    </source>
</evidence>
<evidence type="ECO:0000256" key="3">
    <source>
        <dbReference type="SAM" id="MobiDB-lite"/>
    </source>
</evidence>
<keyword id="KW-0963">Cytoplasm</keyword>
<keyword id="KW-0342">GTP-binding</keyword>
<keyword id="KW-0396">Initiation factor</keyword>
<keyword id="KW-0547">Nucleotide-binding</keyword>
<keyword id="KW-0648">Protein biosynthesis</keyword>
<reference key="1">
    <citation type="journal article" date="2005" name="J. Bacteriol.">
        <title>Whole-genome sequencing of Staphylococcus haemolyticus uncovers the extreme plasticity of its genome and the evolution of human-colonizing staphylococcal species.</title>
        <authorList>
            <person name="Takeuchi F."/>
            <person name="Watanabe S."/>
            <person name="Baba T."/>
            <person name="Yuzawa H."/>
            <person name="Ito T."/>
            <person name="Morimoto Y."/>
            <person name="Kuroda M."/>
            <person name="Cui L."/>
            <person name="Takahashi M."/>
            <person name="Ankai A."/>
            <person name="Baba S."/>
            <person name="Fukui S."/>
            <person name="Lee J.C."/>
            <person name="Hiramatsu K."/>
        </authorList>
    </citation>
    <scope>NUCLEOTIDE SEQUENCE [LARGE SCALE GENOMIC DNA]</scope>
    <source>
        <strain>JCSC1435</strain>
    </source>
</reference>
<organism>
    <name type="scientific">Staphylococcus haemolyticus (strain JCSC1435)</name>
    <dbReference type="NCBI Taxonomy" id="279808"/>
    <lineage>
        <taxon>Bacteria</taxon>
        <taxon>Bacillati</taxon>
        <taxon>Bacillota</taxon>
        <taxon>Bacilli</taxon>
        <taxon>Bacillales</taxon>
        <taxon>Staphylococcaceae</taxon>
        <taxon>Staphylococcus</taxon>
    </lineage>
</organism>
<accession>Q4L5X1</accession>
<name>IF2_STAHJ</name>
<gene>
    <name evidence="2" type="primary">infB</name>
    <name type="ordered locus">SH1645</name>
</gene>
<feature type="chain" id="PRO_0000228246" description="Translation initiation factor IF-2">
    <location>
        <begin position="1"/>
        <end position="716"/>
    </location>
</feature>
<feature type="domain" description="tr-type G">
    <location>
        <begin position="218"/>
        <end position="387"/>
    </location>
</feature>
<feature type="region of interest" description="Disordered" evidence="3">
    <location>
        <begin position="52"/>
        <end position="135"/>
    </location>
</feature>
<feature type="region of interest" description="G1" evidence="1">
    <location>
        <begin position="227"/>
        <end position="234"/>
    </location>
</feature>
<feature type="region of interest" description="G2" evidence="1">
    <location>
        <begin position="252"/>
        <end position="256"/>
    </location>
</feature>
<feature type="region of interest" description="G3" evidence="1">
    <location>
        <begin position="273"/>
        <end position="276"/>
    </location>
</feature>
<feature type="region of interest" description="G4" evidence="1">
    <location>
        <begin position="327"/>
        <end position="330"/>
    </location>
</feature>
<feature type="region of interest" description="G5" evidence="1">
    <location>
        <begin position="363"/>
        <end position="365"/>
    </location>
</feature>
<feature type="compositionally biased region" description="Low complexity" evidence="3">
    <location>
        <begin position="56"/>
        <end position="125"/>
    </location>
</feature>
<feature type="binding site" evidence="2">
    <location>
        <begin position="227"/>
        <end position="234"/>
    </location>
    <ligand>
        <name>GTP</name>
        <dbReference type="ChEBI" id="CHEBI:37565"/>
    </ligand>
</feature>
<feature type="binding site" evidence="2">
    <location>
        <begin position="273"/>
        <end position="277"/>
    </location>
    <ligand>
        <name>GTP</name>
        <dbReference type="ChEBI" id="CHEBI:37565"/>
    </ligand>
</feature>
<feature type="binding site" evidence="2">
    <location>
        <begin position="327"/>
        <end position="330"/>
    </location>
    <ligand>
        <name>GTP</name>
        <dbReference type="ChEBI" id="CHEBI:37565"/>
    </ligand>
</feature>
<proteinExistence type="inferred from homology"/>
<comment type="function">
    <text evidence="2">One of the essential components for the initiation of protein synthesis. Protects formylmethionyl-tRNA from spontaneous hydrolysis and promotes its binding to the 30S ribosomal subunits. Also involved in the hydrolysis of GTP during the formation of the 70S ribosomal complex.</text>
</comment>
<comment type="subcellular location">
    <subcellularLocation>
        <location evidence="2">Cytoplasm</location>
    </subcellularLocation>
</comment>
<comment type="similarity">
    <text evidence="2">Belongs to the TRAFAC class translation factor GTPase superfamily. Classic translation factor GTPase family. IF-2 subfamily.</text>
</comment>